<reference key="1">
    <citation type="submission" date="2008-06" db="EMBL/GenBank/DDBJ databases">
        <title>Complete sequence of Pelodictyon phaeoclathratiforme BU-1.</title>
        <authorList>
            <consortium name="US DOE Joint Genome Institute"/>
            <person name="Lucas S."/>
            <person name="Copeland A."/>
            <person name="Lapidus A."/>
            <person name="Glavina del Rio T."/>
            <person name="Dalin E."/>
            <person name="Tice H."/>
            <person name="Bruce D."/>
            <person name="Goodwin L."/>
            <person name="Pitluck S."/>
            <person name="Schmutz J."/>
            <person name="Larimer F."/>
            <person name="Land M."/>
            <person name="Hauser L."/>
            <person name="Kyrpides N."/>
            <person name="Mikhailova N."/>
            <person name="Liu Z."/>
            <person name="Li T."/>
            <person name="Zhao F."/>
            <person name="Overmann J."/>
            <person name="Bryant D.A."/>
            <person name="Richardson P."/>
        </authorList>
    </citation>
    <scope>NUCLEOTIDE SEQUENCE [LARGE SCALE GENOMIC DNA]</scope>
    <source>
        <strain>DSM 5477 / BU-1</strain>
    </source>
</reference>
<keyword id="KW-0067">ATP-binding</keyword>
<keyword id="KW-0963">Cytoplasm</keyword>
<keyword id="KW-0436">Ligase</keyword>
<keyword id="KW-0547">Nucleotide-binding</keyword>
<keyword id="KW-0566">Pantothenate biosynthesis</keyword>
<keyword id="KW-1185">Reference proteome</keyword>
<sequence length="283" mass="31409">MQIITEPRQMQAIAEKLRLNRQFIGVVMTMGALHEGHLSLIKLARQSAGTVILTIFVNPSQFGANEDLHQYPRPFEQDVALATAAEVDYLFAPEAGTIYPENHQTTLQCGALGERLEGERRPGHFNGVATIVTKLLHITKPHIAIFGEKDAQQLAVIRRMVEDLNLDVKIIAAPIIREENGLAVSSRNIYLSNTERSTAGILYQGICHAEKSIAEQKKNLSVIAAEIEQMIASTPGWRPDYVVFVDEERFEPAEIAEEGKEYRLLLAAYAGKVRLIDNGKIVA</sequence>
<organism>
    <name type="scientific">Pelodictyon phaeoclathratiforme (strain DSM 5477 / BU-1)</name>
    <dbReference type="NCBI Taxonomy" id="324925"/>
    <lineage>
        <taxon>Bacteria</taxon>
        <taxon>Pseudomonadati</taxon>
        <taxon>Chlorobiota</taxon>
        <taxon>Chlorobiia</taxon>
        <taxon>Chlorobiales</taxon>
        <taxon>Chlorobiaceae</taxon>
        <taxon>Chlorobium/Pelodictyon group</taxon>
        <taxon>Pelodictyon</taxon>
    </lineage>
</organism>
<comment type="function">
    <text evidence="1">Catalyzes the condensation of pantoate with beta-alanine in an ATP-dependent reaction via a pantoyl-adenylate intermediate.</text>
</comment>
<comment type="catalytic activity">
    <reaction evidence="1">
        <text>(R)-pantoate + beta-alanine + ATP = (R)-pantothenate + AMP + diphosphate + H(+)</text>
        <dbReference type="Rhea" id="RHEA:10912"/>
        <dbReference type="ChEBI" id="CHEBI:15378"/>
        <dbReference type="ChEBI" id="CHEBI:15980"/>
        <dbReference type="ChEBI" id="CHEBI:29032"/>
        <dbReference type="ChEBI" id="CHEBI:30616"/>
        <dbReference type="ChEBI" id="CHEBI:33019"/>
        <dbReference type="ChEBI" id="CHEBI:57966"/>
        <dbReference type="ChEBI" id="CHEBI:456215"/>
        <dbReference type="EC" id="6.3.2.1"/>
    </reaction>
</comment>
<comment type="pathway">
    <text evidence="1">Cofactor biosynthesis; (R)-pantothenate biosynthesis; (R)-pantothenate from (R)-pantoate and beta-alanine: step 1/1.</text>
</comment>
<comment type="subunit">
    <text evidence="1">Homodimer.</text>
</comment>
<comment type="subcellular location">
    <subcellularLocation>
        <location evidence="1">Cytoplasm</location>
    </subcellularLocation>
</comment>
<comment type="miscellaneous">
    <text evidence="1">The reaction proceeds by a bi uni uni bi ping pong mechanism.</text>
</comment>
<comment type="similarity">
    <text evidence="1">Belongs to the pantothenate synthetase family.</text>
</comment>
<gene>
    <name evidence="1" type="primary">panC</name>
    <name type="ordered locus">Ppha_0667</name>
</gene>
<proteinExistence type="inferred from homology"/>
<protein>
    <recommendedName>
        <fullName evidence="1">Pantothenate synthetase</fullName>
        <shortName evidence="1">PS</shortName>
        <ecNumber evidence="1">6.3.2.1</ecNumber>
    </recommendedName>
    <alternativeName>
        <fullName evidence="1">Pantoate--beta-alanine ligase</fullName>
    </alternativeName>
    <alternativeName>
        <fullName evidence="1">Pantoate-activating enzyme</fullName>
    </alternativeName>
</protein>
<dbReference type="EC" id="6.3.2.1" evidence="1"/>
<dbReference type="EMBL" id="CP001110">
    <property type="protein sequence ID" value="ACF42966.1"/>
    <property type="molecule type" value="Genomic_DNA"/>
</dbReference>
<dbReference type="RefSeq" id="WP_012507461.1">
    <property type="nucleotide sequence ID" value="NC_011060.1"/>
</dbReference>
<dbReference type="SMR" id="B4SDX5"/>
<dbReference type="STRING" id="324925.Ppha_0667"/>
<dbReference type="KEGG" id="pph:Ppha_0667"/>
<dbReference type="eggNOG" id="COG0414">
    <property type="taxonomic scope" value="Bacteria"/>
</dbReference>
<dbReference type="HOGENOM" id="CLU_047148_0_0_10"/>
<dbReference type="OrthoDB" id="9773087at2"/>
<dbReference type="UniPathway" id="UPA00028">
    <property type="reaction ID" value="UER00005"/>
</dbReference>
<dbReference type="Proteomes" id="UP000002724">
    <property type="component" value="Chromosome"/>
</dbReference>
<dbReference type="GO" id="GO:0005829">
    <property type="term" value="C:cytosol"/>
    <property type="evidence" value="ECO:0007669"/>
    <property type="project" value="TreeGrafter"/>
</dbReference>
<dbReference type="GO" id="GO:0005524">
    <property type="term" value="F:ATP binding"/>
    <property type="evidence" value="ECO:0007669"/>
    <property type="project" value="UniProtKB-KW"/>
</dbReference>
<dbReference type="GO" id="GO:0004592">
    <property type="term" value="F:pantoate-beta-alanine ligase activity"/>
    <property type="evidence" value="ECO:0007669"/>
    <property type="project" value="UniProtKB-UniRule"/>
</dbReference>
<dbReference type="GO" id="GO:0015940">
    <property type="term" value="P:pantothenate biosynthetic process"/>
    <property type="evidence" value="ECO:0007669"/>
    <property type="project" value="UniProtKB-UniRule"/>
</dbReference>
<dbReference type="CDD" id="cd00560">
    <property type="entry name" value="PanC"/>
    <property type="match status" value="1"/>
</dbReference>
<dbReference type="FunFam" id="3.40.50.620:FF:000114">
    <property type="entry name" value="Pantothenate synthetase"/>
    <property type="match status" value="1"/>
</dbReference>
<dbReference type="Gene3D" id="3.40.50.620">
    <property type="entry name" value="HUPs"/>
    <property type="match status" value="1"/>
</dbReference>
<dbReference type="Gene3D" id="3.30.1300.10">
    <property type="entry name" value="Pantoate-beta-alanine ligase, C-terminal domain"/>
    <property type="match status" value="1"/>
</dbReference>
<dbReference type="HAMAP" id="MF_00158">
    <property type="entry name" value="PanC"/>
    <property type="match status" value="1"/>
</dbReference>
<dbReference type="InterPro" id="IPR003721">
    <property type="entry name" value="Pantoate_ligase"/>
</dbReference>
<dbReference type="InterPro" id="IPR042176">
    <property type="entry name" value="Pantoate_ligase_C"/>
</dbReference>
<dbReference type="InterPro" id="IPR014729">
    <property type="entry name" value="Rossmann-like_a/b/a_fold"/>
</dbReference>
<dbReference type="NCBIfam" id="TIGR00018">
    <property type="entry name" value="panC"/>
    <property type="match status" value="1"/>
</dbReference>
<dbReference type="PANTHER" id="PTHR21299">
    <property type="entry name" value="CYTIDYLATE KINASE/PANTOATE-BETA-ALANINE LIGASE"/>
    <property type="match status" value="1"/>
</dbReference>
<dbReference type="PANTHER" id="PTHR21299:SF1">
    <property type="entry name" value="PANTOATE--BETA-ALANINE LIGASE"/>
    <property type="match status" value="1"/>
</dbReference>
<dbReference type="Pfam" id="PF02569">
    <property type="entry name" value="Pantoate_ligase"/>
    <property type="match status" value="1"/>
</dbReference>
<dbReference type="SUPFAM" id="SSF52374">
    <property type="entry name" value="Nucleotidylyl transferase"/>
    <property type="match status" value="1"/>
</dbReference>
<name>PANC_PELPB</name>
<evidence type="ECO:0000255" key="1">
    <source>
        <dbReference type="HAMAP-Rule" id="MF_00158"/>
    </source>
</evidence>
<accession>B4SDX5</accession>
<feature type="chain" id="PRO_1000097084" description="Pantothenate synthetase">
    <location>
        <begin position="1"/>
        <end position="283"/>
    </location>
</feature>
<feature type="active site" description="Proton donor" evidence="1">
    <location>
        <position position="37"/>
    </location>
</feature>
<feature type="binding site" evidence="1">
    <location>
        <begin position="30"/>
        <end position="37"/>
    </location>
    <ligand>
        <name>ATP</name>
        <dbReference type="ChEBI" id="CHEBI:30616"/>
    </ligand>
</feature>
<feature type="binding site" evidence="1">
    <location>
        <position position="61"/>
    </location>
    <ligand>
        <name>(R)-pantoate</name>
        <dbReference type="ChEBI" id="CHEBI:15980"/>
    </ligand>
</feature>
<feature type="binding site" evidence="1">
    <location>
        <position position="61"/>
    </location>
    <ligand>
        <name>beta-alanine</name>
        <dbReference type="ChEBI" id="CHEBI:57966"/>
    </ligand>
</feature>
<feature type="binding site" evidence="1">
    <location>
        <begin position="147"/>
        <end position="150"/>
    </location>
    <ligand>
        <name>ATP</name>
        <dbReference type="ChEBI" id="CHEBI:30616"/>
    </ligand>
</feature>
<feature type="binding site" evidence="1">
    <location>
        <position position="153"/>
    </location>
    <ligand>
        <name>(R)-pantoate</name>
        <dbReference type="ChEBI" id="CHEBI:15980"/>
    </ligand>
</feature>
<feature type="binding site" evidence="1">
    <location>
        <position position="176"/>
    </location>
    <ligand>
        <name>ATP</name>
        <dbReference type="ChEBI" id="CHEBI:30616"/>
    </ligand>
</feature>
<feature type="binding site" evidence="1">
    <location>
        <begin position="184"/>
        <end position="187"/>
    </location>
    <ligand>
        <name>ATP</name>
        <dbReference type="ChEBI" id="CHEBI:30616"/>
    </ligand>
</feature>